<accession>P75552</accession>
<keyword id="KW-0067">ATP-binding</keyword>
<keyword id="KW-1003">Cell membrane</keyword>
<keyword id="KW-0472">Membrane</keyword>
<keyword id="KW-0547">Nucleotide-binding</keyword>
<keyword id="KW-0571">Peptide transport</keyword>
<keyword id="KW-0653">Protein transport</keyword>
<keyword id="KW-1185">Reference proteome</keyword>
<keyword id="KW-1278">Translocase</keyword>
<keyword id="KW-0813">Transport</keyword>
<proteinExistence type="inferred from homology"/>
<protein>
    <recommendedName>
        <fullName evidence="4">Oligopeptide transport ATP-binding protein OppD</fullName>
        <ecNumber evidence="1">7.4.2.6</ecNumber>
    </recommendedName>
</protein>
<reference key="1">
    <citation type="journal article" date="1996" name="Nucleic Acids Res.">
        <title>Complete sequence analysis of the genome of the bacterium Mycoplasma pneumoniae.</title>
        <authorList>
            <person name="Himmelreich R."/>
            <person name="Hilbert H."/>
            <person name="Plagens H."/>
            <person name="Pirkl E."/>
            <person name="Li B.-C."/>
            <person name="Herrmann R."/>
        </authorList>
    </citation>
    <scope>NUCLEOTIDE SEQUENCE [LARGE SCALE GENOMIC DNA]</scope>
    <source>
        <strain>ATCC 29342 / M129 / Subtype 1</strain>
    </source>
</reference>
<gene>
    <name type="primary">oppD</name>
    <name type="ordered locus">MPN_217</name>
    <name type="ORF">MP614</name>
</gene>
<sequence length="423" mass="47407">MALKATNFFTEPEYKLQDDLILDIRDLHVSFKVKDGIMQAVRGVDLKVKKGSIVGIVGESGSGKSVCVKSIIGFNDGAKTTAKLMNFKNIDISKMKKHQWQYYRGTYVSYISQDPLFSLNPTMTIGRQVKEAIYVSCKRRYYQTKSDLKYDLQTERIDLDTYKEKLAQAKETYKAKTTKAAVHAKTLEILNFIGIDQAEKRLKAFPSEFSGGMRQRIVIAIAVATEPDLIIADEPTTALDVTIQAKALNLIKQLRDLLNITIIFISHNISLIANFCDFVYVMYAGRLVEKGLVEEIFTNPVHPYTWALMASIPEGTDKNAPLTSIPGYIPNMLSPPKGDAFAARNQFALAIDFEHQPPFFDVTETHKAATWLLHPQAPKVEMPADVKEKIAITRKALAIKMPSQPVKQPKSNGNKKTKTKSAR</sequence>
<organism>
    <name type="scientific">Mycoplasma pneumoniae (strain ATCC 29342 / M129 / Subtype 1)</name>
    <name type="common">Mycoplasmoides pneumoniae</name>
    <dbReference type="NCBI Taxonomy" id="272634"/>
    <lineage>
        <taxon>Bacteria</taxon>
        <taxon>Bacillati</taxon>
        <taxon>Mycoplasmatota</taxon>
        <taxon>Mycoplasmoidales</taxon>
        <taxon>Mycoplasmoidaceae</taxon>
        <taxon>Mycoplasmoides</taxon>
    </lineage>
</organism>
<name>OPPD_MYCPN</name>
<evidence type="ECO:0000250" key="1">
    <source>
        <dbReference type="UniProtKB" id="P24136"/>
    </source>
</evidence>
<evidence type="ECO:0000255" key="2">
    <source>
        <dbReference type="PROSITE-ProRule" id="PRU00434"/>
    </source>
</evidence>
<evidence type="ECO:0000256" key="3">
    <source>
        <dbReference type="SAM" id="MobiDB-lite"/>
    </source>
</evidence>
<evidence type="ECO:0000305" key="4"/>
<comment type="function">
    <text evidence="1">Part of the ABC transporter complex OppABCDF involved in the uptake of oligopeptides (By similarity). Probably responsible for energy coupling to the transport system (By similarity).</text>
</comment>
<comment type="catalytic activity">
    <reaction evidence="1">
        <text>a [peptide](out) + ATP + H2O = a [peptide](in) + ADP + phosphate + H(+)</text>
        <dbReference type="Rhea" id="RHEA:78459"/>
        <dbReference type="Rhea" id="RHEA-COMP:19083"/>
        <dbReference type="ChEBI" id="CHEBI:15377"/>
        <dbReference type="ChEBI" id="CHEBI:15378"/>
        <dbReference type="ChEBI" id="CHEBI:30616"/>
        <dbReference type="ChEBI" id="CHEBI:33710"/>
        <dbReference type="ChEBI" id="CHEBI:43474"/>
        <dbReference type="ChEBI" id="CHEBI:456216"/>
        <dbReference type="EC" id="7.4.2.6"/>
    </reaction>
    <physiologicalReaction direction="left-to-right" evidence="1">
        <dbReference type="Rhea" id="RHEA:78460"/>
    </physiologicalReaction>
</comment>
<comment type="subunit">
    <text evidence="1">The complex is composed of two ATP-binding proteins (OppD and OppF), two transmembrane proteins (OppB and OppC) and a solute-binding protein (OppA).</text>
</comment>
<comment type="subcellular location">
    <subcellularLocation>
        <location evidence="1">Cell membrane</location>
        <topology evidence="1">Peripheral membrane protein</topology>
    </subcellularLocation>
</comment>
<comment type="similarity">
    <text evidence="4">Belongs to the ABC transporter superfamily.</text>
</comment>
<feature type="chain" id="PRO_0000092657" description="Oligopeptide transport ATP-binding protein OppD">
    <location>
        <begin position="1"/>
        <end position="423"/>
    </location>
</feature>
<feature type="domain" description="ABC transporter" evidence="2">
    <location>
        <begin position="24"/>
        <end position="309"/>
    </location>
</feature>
<feature type="region of interest" description="Disordered" evidence="3">
    <location>
        <begin position="398"/>
        <end position="423"/>
    </location>
</feature>
<feature type="compositionally biased region" description="Basic residues" evidence="3">
    <location>
        <begin position="413"/>
        <end position="423"/>
    </location>
</feature>
<feature type="binding site" evidence="2">
    <location>
        <begin position="58"/>
        <end position="65"/>
    </location>
    <ligand>
        <name>ATP</name>
        <dbReference type="ChEBI" id="CHEBI:30616"/>
    </ligand>
</feature>
<dbReference type="EC" id="7.4.2.6" evidence="1"/>
<dbReference type="EMBL" id="U00089">
    <property type="protein sequence ID" value="AAB96262.1"/>
    <property type="molecule type" value="Genomic_DNA"/>
</dbReference>
<dbReference type="PIR" id="S73940">
    <property type="entry name" value="S73940"/>
</dbReference>
<dbReference type="RefSeq" id="NP_109905.1">
    <property type="nucleotide sequence ID" value="NC_000912.1"/>
</dbReference>
<dbReference type="RefSeq" id="WP_010874574.1">
    <property type="nucleotide sequence ID" value="NZ_OU342337.1"/>
</dbReference>
<dbReference type="SMR" id="P75552"/>
<dbReference type="STRING" id="272634.MPN_217"/>
<dbReference type="EnsemblBacteria" id="AAB96262">
    <property type="protein sequence ID" value="AAB96262"/>
    <property type="gene ID" value="MPN_217"/>
</dbReference>
<dbReference type="KEGG" id="mpn:MPN_217"/>
<dbReference type="PATRIC" id="fig|272634.6.peg.236"/>
<dbReference type="HOGENOM" id="CLU_000604_1_23_14"/>
<dbReference type="OrthoDB" id="9806285at2"/>
<dbReference type="BioCyc" id="MPNE272634:G1GJ3-350-MONOMER"/>
<dbReference type="Proteomes" id="UP000000808">
    <property type="component" value="Chromosome"/>
</dbReference>
<dbReference type="GO" id="GO:0005886">
    <property type="term" value="C:plasma membrane"/>
    <property type="evidence" value="ECO:0007669"/>
    <property type="project" value="UniProtKB-SubCell"/>
</dbReference>
<dbReference type="GO" id="GO:0005524">
    <property type="term" value="F:ATP binding"/>
    <property type="evidence" value="ECO:0007669"/>
    <property type="project" value="UniProtKB-KW"/>
</dbReference>
<dbReference type="GO" id="GO:0016887">
    <property type="term" value="F:ATP hydrolysis activity"/>
    <property type="evidence" value="ECO:0007669"/>
    <property type="project" value="InterPro"/>
</dbReference>
<dbReference type="GO" id="GO:0015833">
    <property type="term" value="P:peptide transport"/>
    <property type="evidence" value="ECO:0007669"/>
    <property type="project" value="UniProtKB-KW"/>
</dbReference>
<dbReference type="GO" id="GO:0015031">
    <property type="term" value="P:protein transport"/>
    <property type="evidence" value="ECO:0007669"/>
    <property type="project" value="UniProtKB-KW"/>
</dbReference>
<dbReference type="CDD" id="cd03257">
    <property type="entry name" value="ABC_NikE_OppD_transporters"/>
    <property type="match status" value="1"/>
</dbReference>
<dbReference type="Gene3D" id="3.40.50.300">
    <property type="entry name" value="P-loop containing nucleotide triphosphate hydrolases"/>
    <property type="match status" value="1"/>
</dbReference>
<dbReference type="InterPro" id="IPR003593">
    <property type="entry name" value="AAA+_ATPase"/>
</dbReference>
<dbReference type="InterPro" id="IPR050388">
    <property type="entry name" value="ABC_Ni/Peptide_Import"/>
</dbReference>
<dbReference type="InterPro" id="IPR003439">
    <property type="entry name" value="ABC_transporter-like_ATP-bd"/>
</dbReference>
<dbReference type="InterPro" id="IPR017871">
    <property type="entry name" value="ABC_transporter-like_CS"/>
</dbReference>
<dbReference type="InterPro" id="IPR013563">
    <property type="entry name" value="Oligopep_ABC_C"/>
</dbReference>
<dbReference type="InterPro" id="IPR027417">
    <property type="entry name" value="P-loop_NTPase"/>
</dbReference>
<dbReference type="NCBIfam" id="TIGR01727">
    <property type="entry name" value="oligo_HPY"/>
    <property type="match status" value="1"/>
</dbReference>
<dbReference type="PANTHER" id="PTHR43297:SF2">
    <property type="entry name" value="DIPEPTIDE TRANSPORT ATP-BINDING PROTEIN DPPD"/>
    <property type="match status" value="1"/>
</dbReference>
<dbReference type="PANTHER" id="PTHR43297">
    <property type="entry name" value="OLIGOPEPTIDE TRANSPORT ATP-BINDING PROTEIN APPD"/>
    <property type="match status" value="1"/>
</dbReference>
<dbReference type="Pfam" id="PF00005">
    <property type="entry name" value="ABC_tran"/>
    <property type="match status" value="1"/>
</dbReference>
<dbReference type="Pfam" id="PF08352">
    <property type="entry name" value="oligo_HPY"/>
    <property type="match status" value="1"/>
</dbReference>
<dbReference type="SMART" id="SM00382">
    <property type="entry name" value="AAA"/>
    <property type="match status" value="1"/>
</dbReference>
<dbReference type="SUPFAM" id="SSF52540">
    <property type="entry name" value="P-loop containing nucleoside triphosphate hydrolases"/>
    <property type="match status" value="1"/>
</dbReference>
<dbReference type="PROSITE" id="PS00211">
    <property type="entry name" value="ABC_TRANSPORTER_1"/>
    <property type="match status" value="1"/>
</dbReference>
<dbReference type="PROSITE" id="PS50893">
    <property type="entry name" value="ABC_TRANSPORTER_2"/>
    <property type="match status" value="1"/>
</dbReference>